<proteinExistence type="inferred from homology"/>
<organism>
    <name type="scientific">Staphylococcus aureus (strain Mu50 / ATCC 700699)</name>
    <dbReference type="NCBI Taxonomy" id="158878"/>
    <lineage>
        <taxon>Bacteria</taxon>
        <taxon>Bacillati</taxon>
        <taxon>Bacillota</taxon>
        <taxon>Bacilli</taxon>
        <taxon>Bacillales</taxon>
        <taxon>Staphylococcaceae</taxon>
        <taxon>Staphylococcus</taxon>
    </lineage>
</organism>
<comment type="catalytic activity">
    <reaction>
        <text>O-acetyl-L-serine + hydrogen sulfide = L-cysteine + acetate</text>
        <dbReference type="Rhea" id="RHEA:14829"/>
        <dbReference type="ChEBI" id="CHEBI:29919"/>
        <dbReference type="ChEBI" id="CHEBI:30089"/>
        <dbReference type="ChEBI" id="CHEBI:35235"/>
        <dbReference type="ChEBI" id="CHEBI:58340"/>
        <dbReference type="EC" id="2.5.1.47"/>
    </reaction>
</comment>
<comment type="cofactor">
    <cofactor evidence="1">
        <name>pyridoxal 5'-phosphate</name>
        <dbReference type="ChEBI" id="CHEBI:597326"/>
    </cofactor>
</comment>
<comment type="pathway">
    <text>Amino-acid biosynthesis; L-cysteine biosynthesis; L-cysteine from L-serine: step 2/2.</text>
</comment>
<comment type="subunit">
    <text evidence="1">Homodimer.</text>
</comment>
<comment type="similarity">
    <text evidence="2">Belongs to the cysteine synthase/cystathionine beta-synthase family.</text>
</comment>
<keyword id="KW-0028">Amino-acid biosynthesis</keyword>
<keyword id="KW-0198">Cysteine biosynthesis</keyword>
<keyword id="KW-0663">Pyridoxal phosphate</keyword>
<keyword id="KW-0808">Transferase</keyword>
<name>CYSK_STAAM</name>
<protein>
    <recommendedName>
        <fullName>Cysteine synthase</fullName>
        <shortName>CSase</shortName>
        <ecNumber>2.5.1.47</ecNumber>
    </recommendedName>
    <alternativeName>
        <fullName>O-acetylserine (thiol)-lyase</fullName>
        <shortName>OAS-TL</shortName>
    </alternativeName>
    <alternativeName>
        <fullName>O-acetylserine sulfhydrylase</fullName>
    </alternativeName>
</protein>
<evidence type="ECO:0000250" key="1"/>
<evidence type="ECO:0000305" key="2"/>
<feature type="chain" id="PRO_0000167096" description="Cysteine synthase">
    <location>
        <begin position="1"/>
        <end position="310"/>
    </location>
</feature>
<feature type="binding site" evidence="1">
    <location>
        <position position="76"/>
    </location>
    <ligand>
        <name>pyridoxal 5'-phosphate</name>
        <dbReference type="ChEBI" id="CHEBI:597326"/>
    </ligand>
</feature>
<feature type="binding site" evidence="1">
    <location>
        <begin position="180"/>
        <end position="184"/>
    </location>
    <ligand>
        <name>pyridoxal 5'-phosphate</name>
        <dbReference type="ChEBI" id="CHEBI:597326"/>
    </ligand>
</feature>
<feature type="binding site" evidence="1">
    <location>
        <position position="268"/>
    </location>
    <ligand>
        <name>pyridoxal 5'-phosphate</name>
        <dbReference type="ChEBI" id="CHEBI:597326"/>
    </ligand>
</feature>
<feature type="modified residue" description="N6-(pyridoxal phosphate)lysine" evidence="1">
    <location>
        <position position="46"/>
    </location>
</feature>
<sequence length="310" mass="32976">MAQKPVDNITQIIGGTPVVKLRNVVDDNAADVYVKLEYQNPGGSVKDRIALAMIEKAEREGKIKPGDTIVEPTSGNTGIGLAFVCAAKGYKAVFTMPETMSQERRNLLKAYGAELVLTPGSEAMKGAIKKAKELKEEHGYFEPQQFENPANPEVHELTTGPELLQQFEGKTIDAFLAGVGTGGTLSGVGKVLKKEYPNIEIVAIEPEASPVLSGGEPGPHKLQGLGAGFIPGTLNTEIYDSIIKVGNDTAMEMSRRVAKEEGILAGISSGAAIYAAIQKAKELGKGKTVVTVLPSNGERYLSTPLYSFDD</sequence>
<dbReference type="EC" id="2.5.1.47"/>
<dbReference type="EMBL" id="BA000017">
    <property type="protein sequence ID" value="BAB56675.1"/>
    <property type="molecule type" value="Genomic_DNA"/>
</dbReference>
<dbReference type="RefSeq" id="WP_000057594.1">
    <property type="nucleotide sequence ID" value="NC_002758.2"/>
</dbReference>
<dbReference type="SMR" id="P63870"/>
<dbReference type="KEGG" id="sav:SAV0513"/>
<dbReference type="HOGENOM" id="CLU_021018_1_0_9"/>
<dbReference type="PhylomeDB" id="P63870"/>
<dbReference type="UniPathway" id="UPA00136">
    <property type="reaction ID" value="UER00200"/>
</dbReference>
<dbReference type="Proteomes" id="UP000002481">
    <property type="component" value="Chromosome"/>
</dbReference>
<dbReference type="GO" id="GO:0004124">
    <property type="term" value="F:cysteine synthase activity"/>
    <property type="evidence" value="ECO:0007669"/>
    <property type="project" value="UniProtKB-EC"/>
</dbReference>
<dbReference type="GO" id="GO:0006535">
    <property type="term" value="P:cysteine biosynthetic process from serine"/>
    <property type="evidence" value="ECO:0007669"/>
    <property type="project" value="InterPro"/>
</dbReference>
<dbReference type="CDD" id="cd01561">
    <property type="entry name" value="CBS_like"/>
    <property type="match status" value="1"/>
</dbReference>
<dbReference type="FunFam" id="3.40.50.1100:FF:000003">
    <property type="entry name" value="Cystathionine beta-synthase"/>
    <property type="match status" value="1"/>
</dbReference>
<dbReference type="FunFam" id="3.40.50.1100:FF:000118">
    <property type="entry name" value="Related to CYS4-cystathionine beta-synthase"/>
    <property type="match status" value="1"/>
</dbReference>
<dbReference type="Gene3D" id="3.40.50.1100">
    <property type="match status" value="2"/>
</dbReference>
<dbReference type="InterPro" id="IPR005856">
    <property type="entry name" value="Cys_synth"/>
</dbReference>
<dbReference type="InterPro" id="IPR050214">
    <property type="entry name" value="Cys_Synth/Cystath_Beta-Synth"/>
</dbReference>
<dbReference type="InterPro" id="IPR005859">
    <property type="entry name" value="CysK"/>
</dbReference>
<dbReference type="InterPro" id="IPR001216">
    <property type="entry name" value="P-phosphate_BS"/>
</dbReference>
<dbReference type="InterPro" id="IPR001926">
    <property type="entry name" value="TrpB-like_PALP"/>
</dbReference>
<dbReference type="InterPro" id="IPR036052">
    <property type="entry name" value="TrpB-like_PALP_sf"/>
</dbReference>
<dbReference type="NCBIfam" id="TIGR01139">
    <property type="entry name" value="cysK"/>
    <property type="match status" value="1"/>
</dbReference>
<dbReference type="NCBIfam" id="TIGR01136">
    <property type="entry name" value="cysKM"/>
    <property type="match status" value="1"/>
</dbReference>
<dbReference type="PANTHER" id="PTHR10314">
    <property type="entry name" value="CYSTATHIONINE BETA-SYNTHASE"/>
    <property type="match status" value="1"/>
</dbReference>
<dbReference type="Pfam" id="PF00291">
    <property type="entry name" value="PALP"/>
    <property type="match status" value="1"/>
</dbReference>
<dbReference type="SUPFAM" id="SSF53686">
    <property type="entry name" value="Tryptophan synthase beta subunit-like PLP-dependent enzymes"/>
    <property type="match status" value="1"/>
</dbReference>
<dbReference type="PROSITE" id="PS00901">
    <property type="entry name" value="CYS_SYNTHASE"/>
    <property type="match status" value="1"/>
</dbReference>
<reference key="1">
    <citation type="journal article" date="2001" name="Lancet">
        <title>Whole genome sequencing of meticillin-resistant Staphylococcus aureus.</title>
        <authorList>
            <person name="Kuroda M."/>
            <person name="Ohta T."/>
            <person name="Uchiyama I."/>
            <person name="Baba T."/>
            <person name="Yuzawa H."/>
            <person name="Kobayashi I."/>
            <person name="Cui L."/>
            <person name="Oguchi A."/>
            <person name="Aoki K."/>
            <person name="Nagai Y."/>
            <person name="Lian J.-Q."/>
            <person name="Ito T."/>
            <person name="Kanamori M."/>
            <person name="Matsumaru H."/>
            <person name="Maruyama A."/>
            <person name="Murakami H."/>
            <person name="Hosoyama A."/>
            <person name="Mizutani-Ui Y."/>
            <person name="Takahashi N.K."/>
            <person name="Sawano T."/>
            <person name="Inoue R."/>
            <person name="Kaito C."/>
            <person name="Sekimizu K."/>
            <person name="Hirakawa H."/>
            <person name="Kuhara S."/>
            <person name="Goto S."/>
            <person name="Yabuzaki J."/>
            <person name="Kanehisa M."/>
            <person name="Yamashita A."/>
            <person name="Oshima K."/>
            <person name="Furuya K."/>
            <person name="Yoshino C."/>
            <person name="Shiba T."/>
            <person name="Hattori M."/>
            <person name="Ogasawara N."/>
            <person name="Hayashi H."/>
            <person name="Hiramatsu K."/>
        </authorList>
    </citation>
    <scope>NUCLEOTIDE SEQUENCE [LARGE SCALE GENOMIC DNA]</scope>
    <source>
        <strain>Mu50 / ATCC 700699</strain>
    </source>
</reference>
<gene>
    <name type="primary">cysK</name>
    <name type="ordered locus">SAV0513</name>
</gene>
<accession>P63870</accession>
<accession>Q99W90</accession>